<proteinExistence type="inferred from homology"/>
<keyword id="KW-0963">Cytoplasm</keyword>
<keyword id="KW-0238">DNA-binding</keyword>
<keyword id="KW-0240">DNA-directed RNA polymerase</keyword>
<keyword id="KW-0548">Nucleotidyltransferase</keyword>
<keyword id="KW-0804">Transcription</keyword>
<keyword id="KW-0808">Transferase</keyword>
<gene>
    <name evidence="1" type="primary">rpo1C</name>
    <name evidence="1" type="synonym">rpoA2</name>
    <name type="ordered locus">Mevan_0674</name>
</gene>
<organism>
    <name type="scientific">Methanococcus vannielii (strain ATCC 35089 / DSM 1224 / JCM 13029 / OCM 148 / SB)</name>
    <dbReference type="NCBI Taxonomy" id="406327"/>
    <lineage>
        <taxon>Archaea</taxon>
        <taxon>Methanobacteriati</taxon>
        <taxon>Methanobacteriota</taxon>
        <taxon>Methanomada group</taxon>
        <taxon>Methanococci</taxon>
        <taxon>Methanococcales</taxon>
        <taxon>Methanococcaceae</taxon>
        <taxon>Methanococcus</taxon>
    </lineage>
</organism>
<sequence length="386" mass="42983">MQMADLEKKLENSVLPPLLRRELSEKILKENINEEYIVDEIIQETIRAYSRTVIEPGEAVGVIAAQSIGEPGTQMTMRTFHYAGVAELNVTLGLPRMIEIVDARKEPSTPTMSIYLRGDYKYDRESAAIVSKNIESTTVESVSEDISVDLVNECITIVLDVQQLESRQLTVNNVVEAIKSKMKLKIEENENILSLKIKTPSLKALRKRLPKVREIHLKGVPNIKRVIIRKEIDEYVLYSEGSNLKEVFEIDGVDTTKTTTNNIVEIQDVLGVEAARNAIIREMDATLGNQGLTVDKRHLMMVADLMTTDGVVKPIGRHGIGGEKASVLARAAFEETVKHLYSASMRGYVDDLSGVVENIIVGKPISMGTGCINVCIKKEYEEGKEL</sequence>
<name>RPO1C_METVS</name>
<dbReference type="EC" id="2.7.7.6" evidence="1"/>
<dbReference type="EMBL" id="X73293">
    <property type="protein sequence ID" value="CAA51729.1"/>
    <property type="molecule type" value="Genomic_DNA"/>
</dbReference>
<dbReference type="EMBL" id="CP000742">
    <property type="protein sequence ID" value="ABR54580.1"/>
    <property type="molecule type" value="Genomic_DNA"/>
</dbReference>
<dbReference type="EMBL" id="X15970">
    <property type="protein sequence ID" value="CAA34086.1"/>
    <property type="molecule type" value="Genomic_DNA"/>
</dbReference>
<dbReference type="PIR" id="S47163">
    <property type="entry name" value="S47163"/>
</dbReference>
<dbReference type="RefSeq" id="WP_011972482.1">
    <property type="nucleotide sequence ID" value="NC_009634.1"/>
</dbReference>
<dbReference type="SMR" id="P14247"/>
<dbReference type="STRING" id="406327.Mevan_0674"/>
<dbReference type="GeneID" id="5325061"/>
<dbReference type="KEGG" id="mvn:Mevan_0674"/>
<dbReference type="eggNOG" id="arCOG04256">
    <property type="taxonomic scope" value="Archaea"/>
</dbReference>
<dbReference type="HOGENOM" id="CLU_037097_1_0_2"/>
<dbReference type="OrthoDB" id="372142at2157"/>
<dbReference type="Proteomes" id="UP000001107">
    <property type="component" value="Chromosome"/>
</dbReference>
<dbReference type="GO" id="GO:0005737">
    <property type="term" value="C:cytoplasm"/>
    <property type="evidence" value="ECO:0007669"/>
    <property type="project" value="UniProtKB-SubCell"/>
</dbReference>
<dbReference type="GO" id="GO:0000428">
    <property type="term" value="C:DNA-directed RNA polymerase complex"/>
    <property type="evidence" value="ECO:0007669"/>
    <property type="project" value="UniProtKB-KW"/>
</dbReference>
<dbReference type="GO" id="GO:0003677">
    <property type="term" value="F:DNA binding"/>
    <property type="evidence" value="ECO:0007669"/>
    <property type="project" value="UniProtKB-UniRule"/>
</dbReference>
<dbReference type="GO" id="GO:0003899">
    <property type="term" value="F:DNA-directed RNA polymerase activity"/>
    <property type="evidence" value="ECO:0007669"/>
    <property type="project" value="UniProtKB-UniRule"/>
</dbReference>
<dbReference type="GO" id="GO:0006351">
    <property type="term" value="P:DNA-templated transcription"/>
    <property type="evidence" value="ECO:0007669"/>
    <property type="project" value="UniProtKB-UniRule"/>
</dbReference>
<dbReference type="CDD" id="cd06528">
    <property type="entry name" value="RNAP_A"/>
    <property type="match status" value="1"/>
</dbReference>
<dbReference type="Gene3D" id="1.10.150.390">
    <property type="match status" value="1"/>
</dbReference>
<dbReference type="HAMAP" id="MF_00411">
    <property type="entry name" value="RNApol_arch_Rpo1C"/>
    <property type="match status" value="1"/>
</dbReference>
<dbReference type="InterPro" id="IPR045867">
    <property type="entry name" value="DNA-dir_RpoC_beta_prime"/>
</dbReference>
<dbReference type="InterPro" id="IPR007081">
    <property type="entry name" value="RNA_pol_Rpb1_5"/>
</dbReference>
<dbReference type="InterPro" id="IPR012757">
    <property type="entry name" value="RPO1C"/>
</dbReference>
<dbReference type="NCBIfam" id="TIGR02389">
    <property type="entry name" value="RNA_pol_rpoA2"/>
    <property type="match status" value="1"/>
</dbReference>
<dbReference type="PANTHER" id="PTHR19376">
    <property type="entry name" value="DNA-DIRECTED RNA POLYMERASE"/>
    <property type="match status" value="1"/>
</dbReference>
<dbReference type="PANTHER" id="PTHR19376:SF32">
    <property type="entry name" value="DNA-DIRECTED RNA POLYMERASE III SUBUNIT RPC1"/>
    <property type="match status" value="1"/>
</dbReference>
<dbReference type="Pfam" id="PF04998">
    <property type="entry name" value="RNA_pol_Rpb1_5"/>
    <property type="match status" value="1"/>
</dbReference>
<dbReference type="SUPFAM" id="SSF64484">
    <property type="entry name" value="beta and beta-prime subunits of DNA dependent RNA-polymerase"/>
    <property type="match status" value="1"/>
</dbReference>
<accession>P14247</accession>
<accession>A6UQ08</accession>
<protein>
    <recommendedName>
        <fullName evidence="1">DNA-directed RNA polymerase subunit Rpo1C</fullName>
        <ecNumber evidence="1">2.7.7.6</ecNumber>
    </recommendedName>
    <alternativeName>
        <fullName evidence="1">DNA-directed RNA polymerase subunit A''</fullName>
    </alternativeName>
</protein>
<evidence type="ECO:0000255" key="1">
    <source>
        <dbReference type="HAMAP-Rule" id="MF_00411"/>
    </source>
</evidence>
<feature type="chain" id="PRO_0000074019" description="DNA-directed RNA polymerase subunit Rpo1C">
    <location>
        <begin position="1"/>
        <end position="386"/>
    </location>
</feature>
<comment type="function">
    <text evidence="1">DNA-dependent RNA polymerase (RNAP) catalyzes the transcription of DNA into RNA using the four ribonucleoside triphosphates as substrates. Forms part of the jaw domain.</text>
</comment>
<comment type="catalytic activity">
    <reaction evidence="1">
        <text>RNA(n) + a ribonucleoside 5'-triphosphate = RNA(n+1) + diphosphate</text>
        <dbReference type="Rhea" id="RHEA:21248"/>
        <dbReference type="Rhea" id="RHEA-COMP:14527"/>
        <dbReference type="Rhea" id="RHEA-COMP:17342"/>
        <dbReference type="ChEBI" id="CHEBI:33019"/>
        <dbReference type="ChEBI" id="CHEBI:61557"/>
        <dbReference type="ChEBI" id="CHEBI:140395"/>
        <dbReference type="EC" id="2.7.7.6"/>
    </reaction>
</comment>
<comment type="subunit">
    <text evidence="1">Part of the RNA polymerase complex.</text>
</comment>
<comment type="subcellular location">
    <subcellularLocation>
        <location evidence="1">Cytoplasm</location>
    </subcellularLocation>
</comment>
<comment type="similarity">
    <text evidence="1">Belongs to the RNA polymerase beta' chain family.</text>
</comment>
<reference key="1">
    <citation type="submission" date="1993-06" db="EMBL/GenBank/DDBJ databases">
        <title>DNA sequence of the genes of the large subunits of the DNA dependent RNA-polymerase of Methanococcus vannielii.</title>
        <authorList>
            <person name="Palm P."/>
            <person name="Arnold-Ammer I."/>
            <person name="Lechner K.A."/>
            <person name="Zillig W."/>
        </authorList>
    </citation>
    <scope>NUCLEOTIDE SEQUENCE [GENOMIC DNA]</scope>
</reference>
<reference key="2">
    <citation type="submission" date="2007-06" db="EMBL/GenBank/DDBJ databases">
        <title>Complete sequence of Methanococcus vannielii SB.</title>
        <authorList>
            <consortium name="US DOE Joint Genome Institute"/>
            <person name="Copeland A."/>
            <person name="Lucas S."/>
            <person name="Lapidus A."/>
            <person name="Barry K."/>
            <person name="Glavina del Rio T."/>
            <person name="Dalin E."/>
            <person name="Tice H."/>
            <person name="Pitluck S."/>
            <person name="Chain P."/>
            <person name="Malfatti S."/>
            <person name="Shin M."/>
            <person name="Vergez L."/>
            <person name="Schmutz J."/>
            <person name="Larimer F."/>
            <person name="Land M."/>
            <person name="Hauser L."/>
            <person name="Kyrpides N."/>
            <person name="Anderson I."/>
            <person name="Sieprawska-Lupa M."/>
            <person name="Whitman W.B."/>
            <person name="Richardson P."/>
        </authorList>
    </citation>
    <scope>NUCLEOTIDE SEQUENCE [LARGE SCALE GENOMIC DNA]</scope>
    <source>
        <strain>ATCC 35089 / DSM 1224 / JCM 13029 / OCM 148 / SB</strain>
    </source>
</reference>
<reference key="3">
    <citation type="journal article" date="1989" name="J. Mol. Evol.">
        <title>Organization and nucleotide sequence of a transcriptional unit of Methanococcus vannielii comprising genes for protein synthesis elongation factors and ribosomal proteins.</title>
        <authorList>
            <person name="Lechner K."/>
            <person name="Heller G."/>
            <person name="Boeck A."/>
        </authorList>
    </citation>
    <scope>NUCLEOTIDE SEQUENCE [GENOMIC DNA] OF 171-386</scope>
</reference>